<dbReference type="EC" id="2.5.1.61" evidence="1"/>
<dbReference type="EMBL" id="CP000115">
    <property type="protein sequence ID" value="ABA03738.1"/>
    <property type="molecule type" value="Genomic_DNA"/>
</dbReference>
<dbReference type="RefSeq" id="WP_011313802.1">
    <property type="nucleotide sequence ID" value="NC_007406.1"/>
</dbReference>
<dbReference type="SMR" id="Q3SVF3"/>
<dbReference type="STRING" id="323098.Nwi_0471"/>
<dbReference type="KEGG" id="nwi:Nwi_0471"/>
<dbReference type="eggNOG" id="COG0181">
    <property type="taxonomic scope" value="Bacteria"/>
</dbReference>
<dbReference type="HOGENOM" id="CLU_019704_1_2_5"/>
<dbReference type="OrthoDB" id="9810298at2"/>
<dbReference type="UniPathway" id="UPA00251">
    <property type="reaction ID" value="UER00319"/>
</dbReference>
<dbReference type="Proteomes" id="UP000002531">
    <property type="component" value="Chromosome"/>
</dbReference>
<dbReference type="GO" id="GO:0005737">
    <property type="term" value="C:cytoplasm"/>
    <property type="evidence" value="ECO:0007669"/>
    <property type="project" value="TreeGrafter"/>
</dbReference>
<dbReference type="GO" id="GO:0004418">
    <property type="term" value="F:hydroxymethylbilane synthase activity"/>
    <property type="evidence" value="ECO:0007669"/>
    <property type="project" value="UniProtKB-UniRule"/>
</dbReference>
<dbReference type="GO" id="GO:0006782">
    <property type="term" value="P:protoporphyrinogen IX biosynthetic process"/>
    <property type="evidence" value="ECO:0007669"/>
    <property type="project" value="UniProtKB-UniRule"/>
</dbReference>
<dbReference type="FunFam" id="3.40.190.10:FF:000005">
    <property type="entry name" value="Porphobilinogen deaminase"/>
    <property type="match status" value="1"/>
</dbReference>
<dbReference type="Gene3D" id="3.40.190.10">
    <property type="entry name" value="Periplasmic binding protein-like II"/>
    <property type="match status" value="2"/>
</dbReference>
<dbReference type="Gene3D" id="3.30.160.40">
    <property type="entry name" value="Porphobilinogen deaminase, C-terminal domain"/>
    <property type="match status" value="1"/>
</dbReference>
<dbReference type="HAMAP" id="MF_00260">
    <property type="entry name" value="Porphobil_deam"/>
    <property type="match status" value="1"/>
</dbReference>
<dbReference type="InterPro" id="IPR000860">
    <property type="entry name" value="HemC"/>
</dbReference>
<dbReference type="InterPro" id="IPR022419">
    <property type="entry name" value="Porphobilin_deaminase_cofac_BS"/>
</dbReference>
<dbReference type="InterPro" id="IPR022417">
    <property type="entry name" value="Porphobilin_deaminase_N"/>
</dbReference>
<dbReference type="InterPro" id="IPR022418">
    <property type="entry name" value="Porphobilinogen_deaminase_C"/>
</dbReference>
<dbReference type="InterPro" id="IPR036803">
    <property type="entry name" value="Porphobilinogen_deaminase_C_sf"/>
</dbReference>
<dbReference type="NCBIfam" id="TIGR00212">
    <property type="entry name" value="hemC"/>
    <property type="match status" value="1"/>
</dbReference>
<dbReference type="PANTHER" id="PTHR11557">
    <property type="entry name" value="PORPHOBILINOGEN DEAMINASE"/>
    <property type="match status" value="1"/>
</dbReference>
<dbReference type="PANTHER" id="PTHR11557:SF0">
    <property type="entry name" value="PORPHOBILINOGEN DEAMINASE"/>
    <property type="match status" value="1"/>
</dbReference>
<dbReference type="Pfam" id="PF01379">
    <property type="entry name" value="Porphobil_deam"/>
    <property type="match status" value="1"/>
</dbReference>
<dbReference type="Pfam" id="PF03900">
    <property type="entry name" value="Porphobil_deamC"/>
    <property type="match status" value="1"/>
</dbReference>
<dbReference type="PIRSF" id="PIRSF001438">
    <property type="entry name" value="4pyrrol_synth_OHMeBilane_synth"/>
    <property type="match status" value="1"/>
</dbReference>
<dbReference type="PRINTS" id="PR00151">
    <property type="entry name" value="PORPHBDMNASE"/>
</dbReference>
<dbReference type="SUPFAM" id="SSF53850">
    <property type="entry name" value="Periplasmic binding protein-like II"/>
    <property type="match status" value="1"/>
</dbReference>
<dbReference type="SUPFAM" id="SSF54782">
    <property type="entry name" value="Porphobilinogen deaminase (hydroxymethylbilane synthase), C-terminal domain"/>
    <property type="match status" value="1"/>
</dbReference>
<dbReference type="PROSITE" id="PS00533">
    <property type="entry name" value="PORPHOBILINOGEN_DEAM"/>
    <property type="match status" value="1"/>
</dbReference>
<name>HEM3_NITWN</name>
<sequence length="316" mass="33985">MQSSDETDILATIGTRGSPLALAQAHEVRDRLARAHQVAPERIAIKTIRTSGDAIQDRPLFDVGGKGLFTKEIEEALLAGTIDFAVHSSKDVPTFLPDATWLPAFLPREDVRDVFISPHAGSLNDLPAGATVGTASLRRQAMVLKLRPDLKVNSLRGNVETRLRKISVGEADATLLALAGLNRLGLQDKATRILETDEFLPAVGQGAIAIESRRDDDRINAFVKAIGDPETEVALSAERSFLALLDGSCRTPIGGHCRVNGDRIDFRGLIISPDGTEFYETTREGARADAAALGADAAHELRERAGEKFFTLFAGA</sequence>
<keyword id="KW-0627">Porphyrin biosynthesis</keyword>
<keyword id="KW-1185">Reference proteome</keyword>
<keyword id="KW-0808">Transferase</keyword>
<reference key="1">
    <citation type="journal article" date="2006" name="Appl. Environ. Microbiol.">
        <title>Genome sequence of the chemolithoautotrophic nitrite-oxidizing bacterium Nitrobacter winogradskyi Nb-255.</title>
        <authorList>
            <person name="Starkenburg S.R."/>
            <person name="Chain P.S.G."/>
            <person name="Sayavedra-Soto L.A."/>
            <person name="Hauser L."/>
            <person name="Land M.L."/>
            <person name="Larimer F.W."/>
            <person name="Malfatti S.A."/>
            <person name="Klotz M.G."/>
            <person name="Bottomley P.J."/>
            <person name="Arp D.J."/>
            <person name="Hickey W.J."/>
        </authorList>
    </citation>
    <scope>NUCLEOTIDE SEQUENCE [LARGE SCALE GENOMIC DNA]</scope>
    <source>
        <strain>ATCC 25391 / DSM 10237 / CIP 104748 / NCIMB 11846 / Nb-255</strain>
    </source>
</reference>
<evidence type="ECO:0000255" key="1">
    <source>
        <dbReference type="HAMAP-Rule" id="MF_00260"/>
    </source>
</evidence>
<protein>
    <recommendedName>
        <fullName evidence="1">Porphobilinogen deaminase</fullName>
        <shortName evidence="1">PBG</shortName>
        <ecNumber evidence="1">2.5.1.61</ecNumber>
    </recommendedName>
    <alternativeName>
        <fullName evidence="1">Hydroxymethylbilane synthase</fullName>
        <shortName evidence="1">HMBS</shortName>
    </alternativeName>
    <alternativeName>
        <fullName evidence="1">Pre-uroporphyrinogen synthase</fullName>
    </alternativeName>
</protein>
<comment type="function">
    <text evidence="1">Tetrapolymerization of the monopyrrole PBG into the hydroxymethylbilane pre-uroporphyrinogen in several discrete steps.</text>
</comment>
<comment type="catalytic activity">
    <reaction evidence="1">
        <text>4 porphobilinogen + H2O = hydroxymethylbilane + 4 NH4(+)</text>
        <dbReference type="Rhea" id="RHEA:13185"/>
        <dbReference type="ChEBI" id="CHEBI:15377"/>
        <dbReference type="ChEBI" id="CHEBI:28938"/>
        <dbReference type="ChEBI" id="CHEBI:57845"/>
        <dbReference type="ChEBI" id="CHEBI:58126"/>
        <dbReference type="EC" id="2.5.1.61"/>
    </reaction>
</comment>
<comment type="cofactor">
    <cofactor evidence="1">
        <name>dipyrromethane</name>
        <dbReference type="ChEBI" id="CHEBI:60342"/>
    </cofactor>
    <text evidence="1">Binds 1 dipyrromethane group covalently.</text>
</comment>
<comment type="pathway">
    <text evidence="1">Porphyrin-containing compound metabolism; protoporphyrin-IX biosynthesis; coproporphyrinogen-III from 5-aminolevulinate: step 2/4.</text>
</comment>
<comment type="subunit">
    <text evidence="1">Monomer.</text>
</comment>
<comment type="miscellaneous">
    <text evidence="1">The porphobilinogen subunits are added to the dipyrromethane group.</text>
</comment>
<comment type="similarity">
    <text evidence="1">Belongs to the HMBS family.</text>
</comment>
<organism>
    <name type="scientific">Nitrobacter winogradskyi (strain ATCC 25391 / DSM 10237 / CIP 104748 / NCIMB 11846 / Nb-255)</name>
    <dbReference type="NCBI Taxonomy" id="323098"/>
    <lineage>
        <taxon>Bacteria</taxon>
        <taxon>Pseudomonadati</taxon>
        <taxon>Pseudomonadota</taxon>
        <taxon>Alphaproteobacteria</taxon>
        <taxon>Hyphomicrobiales</taxon>
        <taxon>Nitrobacteraceae</taxon>
        <taxon>Nitrobacter</taxon>
    </lineage>
</organism>
<proteinExistence type="inferred from homology"/>
<accession>Q3SVF3</accession>
<feature type="chain" id="PRO_1000047755" description="Porphobilinogen deaminase">
    <location>
        <begin position="1"/>
        <end position="316"/>
    </location>
</feature>
<feature type="modified residue" description="S-(dipyrrolylmethanemethyl)cysteine" evidence="1">
    <location>
        <position position="249"/>
    </location>
</feature>
<gene>
    <name evidence="1" type="primary">hemC</name>
    <name type="ordered locus">Nwi_0471</name>
</gene>